<comment type="function">
    <text evidence="4 5">Plays an important role in chromosome cohesion during both mitosis and meiosis (PubMed:12827206). In prophase of meiosis, it is involved in the formation of the synaptonemal complex (SC) and specifically, in the diplotene and diakinesis phases of prophase, it stabilizes the association of homologous chromosomes during synapsis and sister chromatid cohesion (PubMed:12827206). It regulates cohesin subunits to promote meiotic chromosome cohesion and localizes non-SMC (structural maintenance of chromosome) cohesin subunits to chromatin prior to or during pre-meiotic S phase (PubMed:12827206). Implicated in influencing either the stability or loading of meiotic-specific cohesin subunit, rec8 (PubMed:12827206). Controls cell cycle exit and cell fusion to prevent the premature differentiation into adult cells (PubMed:15691769). Specifically, regulates hypodermal seam cell identity (PubMed:15691769).</text>
</comment>
<comment type="subunit">
    <text evidence="4">Associates with the cohesin complex (PubMed:12827206). Interacts with smc-1, smc-3, scc-1 and scc-3 (PubMed:12827206).</text>
</comment>
<comment type="subcellular location">
    <subcellularLocation>
        <location evidence="3 4">Nucleus</location>
    </subcellularLocation>
</comment>
<comment type="developmental stage">
    <text evidence="3 4">Expression is increased during late postembryonic development (PubMed:10550049). In embryos, there is diffuse nuclear expression at interphase, but this reduces by the metaphase-anaphase transition (PubMed:12827206). There is diffuse expression in pre-meiotic germline nuclei as the nuclei enter meiotic prophase and later in the diplotene and diakinesis phases of prophase (PubMed:12827206).</text>
</comment>
<comment type="disruption phenotype">
    <text evidence="4 5">RNAi-mediated knockdown is embryonic lethal (PubMed:12827206). In germline cells, aberrant segregation of chromosomes is observed during both mitosis and meiosis, resulting in aneuploidy (PubMed:12827206). There is a weaker mitosis phenotype in somatic tissues (PubMed:12827206). Weak seam cell differentiation capacity during the L4 larval development stage, including 30% increased seam cell fusion and reduced cell cycle exit (PubMed:15691769). RNAi-mediated knockdown increases the survival rate and partially restores alae formation of let-7 n2853 mutants at 20 dgrees Celsius (PubMed:15691769).</text>
</comment>
<comment type="similarity">
    <text evidence="6">Belongs to the timeless family.</text>
</comment>
<name>TIM_CAEEL</name>
<accession>G5EDN3</accession>
<sequence length="1353" mass="157011">MNVLVQGAVHALGYYEDGKYSREPDCYESIRDLIRYLREDGDDHTARIECGRHNLVEQDLVPMVKCEDLTDDEFDIAIRLMVNLCQPAISTMRGKPPADRDQWKMYWELEENLRRAKTAFSDAHFFTAIKKRIDNYFIDTEYEDRDERLRLVVERIVLLIKYVFSINPDTSEGRRTRIEDSSHDRVIIAFLESGIDKTLMHIANQPREKEFHVTILDIFALILKEQTAEDLATKSEEVSTAEQKKTEEEFRKIIENHVVKETQKRKSFSRFGGSYTIKGLKGISANSSQVVFKPIQNVEKHNFLDDRKAKKRAPRNRRPFEIDTNSHFASSEVRGMLRDMVIRIIETCFNRLMKSSKTTVFVQVQKTSQINYFFLIKFVLRFVRLSRQDHLLERISECIGVEAFHENNVQLTEYVENATTLKGVEAKSHGLKAQYALGAYNELVLLHRYIYEHAKEENERKFAKRALEHIVNVEEYRELPIFIIKKFSSSVLSNNFLRELVLTTHHYMKLVERFVKTGALKKVTKKVKVRKATKKSKMSEEDVRSEFDGMSKKDLDRLWEESKGLVLQILKKEVPEMRGMNPIDSQLDVPVDAQQKFAKLSIQRSLRSRGFPAAVGLYHASRALWPESFKRGLTDFQDSPGEEDQLQELEQLLKADMKKVAKDLKKAESCKTCDEDPAYKKYDKMDATALQSLWEQSTDTLARILSHELPESESTSPVNWQLDITPDVQQKFAMLAIQRALRARDLPAAVGLYHTSRKLWPGDEAIFGAPGIGVEEEIAELKAILEADLHEVAREMKVAEDRAEDPDEEDPAEPYDSEQEEEEEVPAWKVEEIDFQFDSYVCKFSNVDVLKWYVFLLNDFSKNSTELNQALVKMLHRIAFDLKLPIKLYQVSLFQVFSKVNEHFTHLSKDLRKSSRLYELYQFGFHLLKKFFSKFTGDLAIEALFWKGPRECFEIENGYGSWVKSREADIRVWTEDLEIELRNLYEEYRTMETRDGIDVLDFIEHNLSRARSRKKVAKKLIEFGFDLLGAKWKNSDKARMDSVLPIGDIQKWYDEWKEAGARGDLVNVLQEKLNEDLGMEISRKKILKQLAHMDILYEKPKKEKPLPQWDTGLIEELKKLKEQYDDIPDALNMLGVNIVRYVMKRLSEKKPTRQVERHLESLGATIPERSKKSEKNGKKFDDFLNDDDDDSENDVGGGSEDDEEEEIVMKSKRIIPDSEDEEEHIEQEEAQKKLEKVAEKPNTLMGMIAGRKRKLAQLESDSSDESDDDDSAEKEEKKLPAAEDDSDLEEDAVIYKRSYVDALLTGGSIAGNGITETRRDTSEEREDDDDEDPFTKKLTFKRRIVMSDNEDEA</sequence>
<gene>
    <name evidence="9" type="primary">tim-1</name>
    <name evidence="9" type="synonym">csg-5</name>
    <name evidence="9" type="ORF">Y75B8A.22</name>
</gene>
<organism evidence="7">
    <name type="scientific">Caenorhabditis elegans</name>
    <dbReference type="NCBI Taxonomy" id="6239"/>
    <lineage>
        <taxon>Eukaryota</taxon>
        <taxon>Metazoa</taxon>
        <taxon>Ecdysozoa</taxon>
        <taxon>Nematoda</taxon>
        <taxon>Chromadorea</taxon>
        <taxon>Rhabditida</taxon>
        <taxon>Rhabditina</taxon>
        <taxon>Rhabditomorpha</taxon>
        <taxon>Rhabditoidea</taxon>
        <taxon>Rhabditidae</taxon>
        <taxon>Peloderinae</taxon>
        <taxon>Caenorhabditis</taxon>
    </lineage>
</organism>
<protein>
    <recommendedName>
        <fullName evidence="1">Protein timeless homolog</fullName>
    </recommendedName>
</protein>
<feature type="chain" id="PRO_0000432381" description="Protein timeless homolog">
    <location>
        <begin position="1"/>
        <end position="1353"/>
    </location>
</feature>
<feature type="region of interest" description="Disordered" evidence="2">
    <location>
        <begin position="798"/>
        <end position="825"/>
    </location>
</feature>
<feature type="region of interest" description="Disordered" evidence="2">
    <location>
        <begin position="1150"/>
        <end position="1291"/>
    </location>
</feature>
<feature type="region of interest" description="Disordered" evidence="2">
    <location>
        <begin position="1306"/>
        <end position="1335"/>
    </location>
</feature>
<feature type="compositionally biased region" description="Acidic residues" evidence="2">
    <location>
        <begin position="802"/>
        <end position="825"/>
    </location>
</feature>
<feature type="compositionally biased region" description="Basic and acidic residues" evidence="2">
    <location>
        <begin position="1150"/>
        <end position="1160"/>
    </location>
</feature>
<feature type="compositionally biased region" description="Basic and acidic residues" evidence="2">
    <location>
        <begin position="1168"/>
        <end position="1182"/>
    </location>
</feature>
<feature type="compositionally biased region" description="Acidic residues" evidence="2">
    <location>
        <begin position="1183"/>
        <end position="1206"/>
    </location>
</feature>
<feature type="compositionally biased region" description="Acidic residues" evidence="2">
    <location>
        <begin position="1217"/>
        <end position="1226"/>
    </location>
</feature>
<feature type="compositionally biased region" description="Basic and acidic residues" evidence="2">
    <location>
        <begin position="1227"/>
        <end position="1239"/>
    </location>
</feature>
<feature type="compositionally biased region" description="Acidic residues" evidence="2">
    <location>
        <begin position="1261"/>
        <end position="1273"/>
    </location>
</feature>
<feature type="compositionally biased region" description="Acidic residues" evidence="2">
    <location>
        <begin position="1282"/>
        <end position="1291"/>
    </location>
</feature>
<feature type="compositionally biased region" description="Acidic residues" evidence="2">
    <location>
        <begin position="1323"/>
        <end position="1332"/>
    </location>
</feature>
<proteinExistence type="evidence at protein level"/>
<keyword id="KW-0002">3D-structure</keyword>
<keyword id="KW-0131">Cell cycle</keyword>
<keyword id="KW-0132">Cell division</keyword>
<keyword id="KW-0217">Developmental protein</keyword>
<keyword id="KW-0469">Meiosis</keyword>
<keyword id="KW-0498">Mitosis</keyword>
<keyword id="KW-0539">Nucleus</keyword>
<keyword id="KW-1185">Reference proteome</keyword>
<dbReference type="EMBL" id="AF183401">
    <property type="protein sequence ID" value="AAF13189.1"/>
    <property type="molecule type" value="mRNA"/>
</dbReference>
<dbReference type="EMBL" id="BX284603">
    <property type="protein sequence ID" value="CAA22106.3"/>
    <property type="molecule type" value="Genomic_DNA"/>
</dbReference>
<dbReference type="PIR" id="T27404">
    <property type="entry name" value="T27404"/>
</dbReference>
<dbReference type="RefSeq" id="NP_499594.2">
    <property type="nucleotide sequence ID" value="NM_067193.5"/>
</dbReference>
<dbReference type="PDB" id="8OUW">
    <property type="method" value="EM"/>
    <property type="resolution" value="3.75 A"/>
    <property type="chains" value="K=1-1353"/>
</dbReference>
<dbReference type="PDBsum" id="8OUW"/>
<dbReference type="EMDB" id="EMD-17204"/>
<dbReference type="SMR" id="G5EDN3"/>
<dbReference type="FunCoup" id="G5EDN3">
    <property type="interactions" value="2161"/>
</dbReference>
<dbReference type="STRING" id="6239.Y75B8A.22.1"/>
<dbReference type="PaxDb" id="6239-Y75B8A.22.2"/>
<dbReference type="PeptideAtlas" id="G5EDN3"/>
<dbReference type="EnsemblMetazoa" id="Y75B8A.22.1">
    <property type="protein sequence ID" value="Y75B8A.22.1"/>
    <property type="gene ID" value="WBGene00006571"/>
</dbReference>
<dbReference type="EnsemblMetazoa" id="Y75B8A.22.2">
    <property type="protein sequence ID" value="Y75B8A.22.2"/>
    <property type="gene ID" value="WBGene00006571"/>
</dbReference>
<dbReference type="GeneID" id="176652"/>
<dbReference type="KEGG" id="cel:CELE_Y75B8A.22"/>
<dbReference type="AGR" id="WB:WBGene00006571"/>
<dbReference type="CTD" id="176652"/>
<dbReference type="WormBase" id="Y75B8A.22">
    <property type="protein sequence ID" value="CE23033"/>
    <property type="gene ID" value="WBGene00006571"/>
    <property type="gene designation" value="tim-1"/>
</dbReference>
<dbReference type="eggNOG" id="KOG1974">
    <property type="taxonomic scope" value="Eukaryota"/>
</dbReference>
<dbReference type="GeneTree" id="ENSGT00390000015124"/>
<dbReference type="HOGENOM" id="CLU_003493_2_0_1"/>
<dbReference type="InParanoid" id="G5EDN3"/>
<dbReference type="OMA" id="TINLCQP"/>
<dbReference type="OrthoDB" id="310853at2759"/>
<dbReference type="PhylomeDB" id="G5EDN3"/>
<dbReference type="PRO" id="PR:G5EDN3"/>
<dbReference type="Proteomes" id="UP000001940">
    <property type="component" value="Chromosome III"/>
</dbReference>
<dbReference type="Bgee" id="WBGene00006571">
    <property type="expression patterns" value="Expressed in germ line (C elegans) and 4 other cell types or tissues"/>
</dbReference>
<dbReference type="GO" id="GO:0005634">
    <property type="term" value="C:nucleus"/>
    <property type="evidence" value="ECO:0000314"/>
    <property type="project" value="WormBase"/>
</dbReference>
<dbReference type="GO" id="GO:0031298">
    <property type="term" value="C:replication fork protection complex"/>
    <property type="evidence" value="ECO:0000318"/>
    <property type="project" value="GO_Central"/>
</dbReference>
<dbReference type="GO" id="GO:0003677">
    <property type="term" value="F:DNA binding"/>
    <property type="evidence" value="ECO:0000318"/>
    <property type="project" value="GO_Central"/>
</dbReference>
<dbReference type="GO" id="GO:0051301">
    <property type="term" value="P:cell division"/>
    <property type="evidence" value="ECO:0007669"/>
    <property type="project" value="UniProtKB-KW"/>
</dbReference>
<dbReference type="GO" id="GO:0006281">
    <property type="term" value="P:DNA repair"/>
    <property type="evidence" value="ECO:0000318"/>
    <property type="project" value="GO_Central"/>
</dbReference>
<dbReference type="GO" id="GO:0000076">
    <property type="term" value="P:DNA replication checkpoint signaling"/>
    <property type="evidence" value="ECO:0000318"/>
    <property type="project" value="GO_Central"/>
</dbReference>
<dbReference type="GO" id="GO:0009792">
    <property type="term" value="P:embryo development ending in birth or egg hatching"/>
    <property type="evidence" value="ECO:0000315"/>
    <property type="project" value="WormBase"/>
</dbReference>
<dbReference type="GO" id="GO:0051321">
    <property type="term" value="P:meiotic cell cycle"/>
    <property type="evidence" value="ECO:0007669"/>
    <property type="project" value="UniProtKB-KW"/>
</dbReference>
<dbReference type="GO" id="GO:0051177">
    <property type="term" value="P:meiotic sister chromatid cohesion"/>
    <property type="evidence" value="ECO:0000315"/>
    <property type="project" value="WormBase"/>
</dbReference>
<dbReference type="GO" id="GO:0007064">
    <property type="term" value="P:mitotic sister chromatid cohesion"/>
    <property type="evidence" value="ECO:0000315"/>
    <property type="project" value="WormBase"/>
</dbReference>
<dbReference type="GO" id="GO:0007063">
    <property type="term" value="P:regulation of sister chromatid cohesion"/>
    <property type="evidence" value="ECO:0000315"/>
    <property type="project" value="WormBase"/>
</dbReference>
<dbReference type="GO" id="GO:0043111">
    <property type="term" value="P:replication fork arrest"/>
    <property type="evidence" value="ECO:0000318"/>
    <property type="project" value="GO_Central"/>
</dbReference>
<dbReference type="InterPro" id="IPR044998">
    <property type="entry name" value="Timeless"/>
</dbReference>
<dbReference type="InterPro" id="IPR006906">
    <property type="entry name" value="Timeless_N"/>
</dbReference>
<dbReference type="PANTHER" id="PTHR22940:SF4">
    <property type="entry name" value="PROTEIN TIMELESS HOMOLOG"/>
    <property type="match status" value="1"/>
</dbReference>
<dbReference type="PANTHER" id="PTHR22940">
    <property type="entry name" value="TIMEOUT/TIMELESS-2"/>
    <property type="match status" value="1"/>
</dbReference>
<dbReference type="Pfam" id="PF04821">
    <property type="entry name" value="TIMELESS"/>
    <property type="match status" value="1"/>
</dbReference>
<reference evidence="7" key="1">
    <citation type="journal article" date="1999" name="Science">
        <title>Similarity of the C. elegans developmental timing protein LIN-42 to circadian rhythm proteins.</title>
        <authorList>
            <person name="Jeon M."/>
            <person name="Gardner H.F."/>
            <person name="Miller E.A."/>
            <person name="Deshler J."/>
            <person name="Rougvie A.E."/>
        </authorList>
    </citation>
    <scope>NUCLEOTIDE SEQUENCE [MRNA]</scope>
    <scope>SUBCELLULAR LOCATION</scope>
    <scope>DEVELOPMENTAL STAGE</scope>
    <source>
        <strain evidence="7">Bristol N2</strain>
    </source>
</reference>
<reference evidence="8" key="2">
    <citation type="journal article" date="1998" name="Science">
        <title>Genome sequence of the nematode C. elegans: a platform for investigating biology.</title>
        <authorList>
            <consortium name="The C. elegans sequencing consortium"/>
        </authorList>
    </citation>
    <scope>NUCLEOTIDE SEQUENCE [LARGE SCALE GENOMIC DNA]</scope>
    <source>
        <strain evidence="8">Bristol N2</strain>
    </source>
</reference>
<reference evidence="6" key="3">
    <citation type="journal article" date="2003" name="Nature">
        <title>Chromosome cohesion is regulated by a clock gene paralogue TIM-1.</title>
        <authorList>
            <person name="Chan R.C."/>
            <person name="Chan A."/>
            <person name="Jeon M."/>
            <person name="Wu T.F."/>
            <person name="Pasqualone D."/>
            <person name="Rougvie A.E."/>
            <person name="Meyer B.J."/>
        </authorList>
    </citation>
    <scope>FUNCTION</scope>
    <scope>SUBUNIT</scope>
    <scope>SUBCELLULAR LOCATION</scope>
    <scope>DEVELOPMENTAL STAGE</scope>
    <scope>DISRUPTION PHENOTYPE</scope>
    <scope>IDENTIFICATION BY MASS SPECTROMETRY</scope>
</reference>
<reference evidence="6" key="4">
    <citation type="journal article" date="2005" name="Dev. Cell">
        <title>Developmental timing in C. elegans is regulated by kin-20 and tim-1, homologs of core circadian clock genes.</title>
        <authorList>
            <person name="Banerjee D."/>
            <person name="Kwok A."/>
            <person name="Lin S.-Y."/>
            <person name="Slack F.J."/>
        </authorList>
    </citation>
    <scope>FUNCTION</scope>
    <scope>DISRUPTION PHENOTYPE</scope>
</reference>
<evidence type="ECO:0000250" key="1">
    <source>
        <dbReference type="UniProtKB" id="Q9R1X4"/>
    </source>
</evidence>
<evidence type="ECO:0000256" key="2">
    <source>
        <dbReference type="SAM" id="MobiDB-lite"/>
    </source>
</evidence>
<evidence type="ECO:0000269" key="3">
    <source>
    </source>
</evidence>
<evidence type="ECO:0000269" key="4">
    <source>
    </source>
</evidence>
<evidence type="ECO:0000269" key="5">
    <source>
    </source>
</evidence>
<evidence type="ECO:0000305" key="6"/>
<evidence type="ECO:0000312" key="7">
    <source>
        <dbReference type="EMBL" id="AAF13189.1"/>
    </source>
</evidence>
<evidence type="ECO:0000312" key="8">
    <source>
        <dbReference type="Proteomes" id="UP000001940"/>
    </source>
</evidence>
<evidence type="ECO:0000312" key="9">
    <source>
        <dbReference type="WormBase" id="Y75B8A.22"/>
    </source>
</evidence>